<sequence length="330" mass="36964">MSTPPAKRQKRDQYRKRAAAAANEDTGKVKLPQKKFYRQRAHANPFSDHQLDYPLSPAHMDWSSHYPAFVNPDPEQKNLAGARKLLKDVEVVDIGCGFGGLLVGLAPLLPETLMLGMEIRTQVIEYVENRIQALRTQQNQLKNSSTTASESPAPAIPAEPATDGASPDAASTPETSNSPVPGGYQNISALRSNTMKFFPNFFGKQQLSKIFICFPDPHFKAKKHKARIISENLNAEYAYALKPGGLLYTITDVEEYHHWVLRHFREEGEHEASEGGVKDLFERVSEEELASDPCVEVMRESTEEGKKVTRNKGNKYVAVFRRKADPEWPA</sequence>
<feature type="chain" id="PRO_0000370588" description="tRNA (guanine-N(7)-)-methyltransferase">
    <location>
        <begin position="1"/>
        <end position="330"/>
    </location>
</feature>
<feature type="region of interest" description="Disordered" evidence="2">
    <location>
        <begin position="1"/>
        <end position="27"/>
    </location>
</feature>
<feature type="region of interest" description="Disordered" evidence="2">
    <location>
        <begin position="138"/>
        <end position="185"/>
    </location>
</feature>
<feature type="compositionally biased region" description="Basic residues" evidence="2">
    <location>
        <begin position="7"/>
        <end position="18"/>
    </location>
</feature>
<feature type="compositionally biased region" description="Low complexity" evidence="2">
    <location>
        <begin position="144"/>
        <end position="162"/>
    </location>
</feature>
<feature type="compositionally biased region" description="Polar residues" evidence="2">
    <location>
        <begin position="172"/>
        <end position="185"/>
    </location>
</feature>
<feature type="active site" evidence="1">
    <location>
        <position position="216"/>
    </location>
</feature>
<feature type="binding site" evidence="1">
    <location>
        <position position="95"/>
    </location>
    <ligand>
        <name>S-adenosyl-L-methionine</name>
        <dbReference type="ChEBI" id="CHEBI:59789"/>
    </ligand>
</feature>
<feature type="binding site" evidence="1">
    <location>
        <begin position="118"/>
        <end position="119"/>
    </location>
    <ligand>
        <name>S-adenosyl-L-methionine</name>
        <dbReference type="ChEBI" id="CHEBI:59789"/>
    </ligand>
</feature>
<feature type="binding site" evidence="1">
    <location>
        <begin position="193"/>
        <end position="194"/>
    </location>
    <ligand>
        <name>S-adenosyl-L-methionine</name>
        <dbReference type="ChEBI" id="CHEBI:59789"/>
    </ligand>
</feature>
<feature type="binding site" evidence="1">
    <location>
        <position position="213"/>
    </location>
    <ligand>
        <name>S-adenosyl-L-methionine</name>
        <dbReference type="ChEBI" id="CHEBI:59789"/>
    </ligand>
</feature>
<feature type="binding site" evidence="1">
    <location>
        <begin position="302"/>
        <end position="304"/>
    </location>
    <ligand>
        <name>S-adenosyl-L-methionine</name>
        <dbReference type="ChEBI" id="CHEBI:59789"/>
    </ligand>
</feature>
<keyword id="KW-0489">Methyltransferase</keyword>
<keyword id="KW-0539">Nucleus</keyword>
<keyword id="KW-1185">Reference proteome</keyword>
<keyword id="KW-0694">RNA-binding</keyword>
<keyword id="KW-0949">S-adenosyl-L-methionine</keyword>
<keyword id="KW-0808">Transferase</keyword>
<keyword id="KW-0819">tRNA processing</keyword>
<keyword id="KW-0820">tRNA-binding</keyword>
<protein>
    <recommendedName>
        <fullName evidence="1">tRNA (guanine-N(7)-)-methyltransferase</fullName>
        <ecNumber evidence="1">2.1.1.33</ecNumber>
    </recommendedName>
    <alternativeName>
        <fullName evidence="1">Transfer RNA methyltransferase 8</fullName>
    </alternativeName>
    <alternativeName>
        <fullName evidence="1">tRNA (guanine(46)-N(7))-methyltransferase</fullName>
    </alternativeName>
    <alternativeName>
        <fullName evidence="1">tRNA(m7G46)-methyltransferase</fullName>
    </alternativeName>
</protein>
<accession>Q2UU72</accession>
<proteinExistence type="inferred from homology"/>
<comment type="function">
    <text evidence="1">Catalyzes the formation of N(7)-methylguanine at position 46 (m7G46) in tRNA.</text>
</comment>
<comment type="catalytic activity">
    <reaction evidence="1">
        <text>guanosine(46) in tRNA + S-adenosyl-L-methionine = N(7)-methylguanosine(46) in tRNA + S-adenosyl-L-homocysteine</text>
        <dbReference type="Rhea" id="RHEA:42708"/>
        <dbReference type="Rhea" id="RHEA-COMP:10188"/>
        <dbReference type="Rhea" id="RHEA-COMP:10189"/>
        <dbReference type="ChEBI" id="CHEBI:57856"/>
        <dbReference type="ChEBI" id="CHEBI:59789"/>
        <dbReference type="ChEBI" id="CHEBI:74269"/>
        <dbReference type="ChEBI" id="CHEBI:74480"/>
        <dbReference type="EC" id="2.1.1.33"/>
    </reaction>
</comment>
<comment type="pathway">
    <text evidence="1">tRNA modification; N(7)-methylguanine-tRNA biosynthesis.</text>
</comment>
<comment type="subunit">
    <text evidence="1">Forms a complex with trm82.</text>
</comment>
<comment type="subcellular location">
    <subcellularLocation>
        <location evidence="1">Nucleus</location>
    </subcellularLocation>
</comment>
<comment type="similarity">
    <text evidence="1">Belongs to the class I-like SAM-binding methyltransferase superfamily. TrmB family.</text>
</comment>
<dbReference type="EC" id="2.1.1.33" evidence="1"/>
<dbReference type="EMBL" id="BA000049">
    <property type="protein sequence ID" value="BAE54893.1"/>
    <property type="molecule type" value="Genomic_DNA"/>
</dbReference>
<dbReference type="RefSeq" id="XP_001816895.1">
    <property type="nucleotide sequence ID" value="XM_001816843.1"/>
</dbReference>
<dbReference type="SMR" id="Q2UU72"/>
<dbReference type="STRING" id="510516.Q2UU72"/>
<dbReference type="EnsemblFungi" id="BAE54893">
    <property type="protein sequence ID" value="BAE54893"/>
    <property type="gene ID" value="AO090009000430"/>
</dbReference>
<dbReference type="GeneID" id="5988825"/>
<dbReference type="KEGG" id="aor:AO090009000430"/>
<dbReference type="VEuPathDB" id="FungiDB:AO090009000430"/>
<dbReference type="HOGENOM" id="CLU_050910_3_1_1"/>
<dbReference type="OMA" id="LPNYFAK"/>
<dbReference type="OrthoDB" id="115863at5052"/>
<dbReference type="UniPathway" id="UPA00989"/>
<dbReference type="Proteomes" id="UP000006564">
    <property type="component" value="Chromosome 1"/>
</dbReference>
<dbReference type="GO" id="GO:0005634">
    <property type="term" value="C:nucleus"/>
    <property type="evidence" value="ECO:0007669"/>
    <property type="project" value="UniProtKB-SubCell"/>
</dbReference>
<dbReference type="GO" id="GO:0043527">
    <property type="term" value="C:tRNA methyltransferase complex"/>
    <property type="evidence" value="ECO:0007669"/>
    <property type="project" value="TreeGrafter"/>
</dbReference>
<dbReference type="GO" id="GO:0008176">
    <property type="term" value="F:tRNA (guanine(46)-N7)-methyltransferase activity"/>
    <property type="evidence" value="ECO:0007669"/>
    <property type="project" value="UniProtKB-UniRule"/>
</dbReference>
<dbReference type="GO" id="GO:0000049">
    <property type="term" value="F:tRNA binding"/>
    <property type="evidence" value="ECO:0007669"/>
    <property type="project" value="UniProtKB-UniRule"/>
</dbReference>
<dbReference type="Gene3D" id="3.40.50.150">
    <property type="entry name" value="Vaccinia Virus protein VP39"/>
    <property type="match status" value="1"/>
</dbReference>
<dbReference type="HAMAP" id="MF_03055">
    <property type="entry name" value="tRNA_methyltr_TrmB_euk"/>
    <property type="match status" value="1"/>
</dbReference>
<dbReference type="InterPro" id="IPR029063">
    <property type="entry name" value="SAM-dependent_MTases_sf"/>
</dbReference>
<dbReference type="InterPro" id="IPR025763">
    <property type="entry name" value="Trm8_euk"/>
</dbReference>
<dbReference type="InterPro" id="IPR003358">
    <property type="entry name" value="tRNA_(Gua-N-7)_MeTrfase_Trmb"/>
</dbReference>
<dbReference type="PANTHER" id="PTHR23417">
    <property type="entry name" value="3-DEOXY-D-MANNO-OCTULOSONIC-ACID TRANSFERASE/TRNA GUANINE-N 7 - -METHYLTRANSFERASE"/>
    <property type="match status" value="1"/>
</dbReference>
<dbReference type="PANTHER" id="PTHR23417:SF16">
    <property type="entry name" value="TRNA (GUANINE-N(7)-)-METHYLTRANSFERASE"/>
    <property type="match status" value="1"/>
</dbReference>
<dbReference type="Pfam" id="PF02390">
    <property type="entry name" value="Methyltransf_4"/>
    <property type="match status" value="2"/>
</dbReference>
<dbReference type="SUPFAM" id="SSF53335">
    <property type="entry name" value="S-adenosyl-L-methionine-dependent methyltransferases"/>
    <property type="match status" value="1"/>
</dbReference>
<dbReference type="PROSITE" id="PS51625">
    <property type="entry name" value="SAM_MT_TRMB"/>
    <property type="match status" value="1"/>
</dbReference>
<gene>
    <name type="primary">trm8</name>
    <name type="ORF">AO090009000430</name>
</gene>
<evidence type="ECO:0000255" key="1">
    <source>
        <dbReference type="HAMAP-Rule" id="MF_03055"/>
    </source>
</evidence>
<evidence type="ECO:0000256" key="2">
    <source>
        <dbReference type="SAM" id="MobiDB-lite"/>
    </source>
</evidence>
<organism>
    <name type="scientific">Aspergillus oryzae (strain ATCC 42149 / RIB 40)</name>
    <name type="common">Yellow koji mold</name>
    <dbReference type="NCBI Taxonomy" id="510516"/>
    <lineage>
        <taxon>Eukaryota</taxon>
        <taxon>Fungi</taxon>
        <taxon>Dikarya</taxon>
        <taxon>Ascomycota</taxon>
        <taxon>Pezizomycotina</taxon>
        <taxon>Eurotiomycetes</taxon>
        <taxon>Eurotiomycetidae</taxon>
        <taxon>Eurotiales</taxon>
        <taxon>Aspergillaceae</taxon>
        <taxon>Aspergillus</taxon>
        <taxon>Aspergillus subgen. Circumdati</taxon>
    </lineage>
</organism>
<reference key="1">
    <citation type="journal article" date="2005" name="Nature">
        <title>Genome sequencing and analysis of Aspergillus oryzae.</title>
        <authorList>
            <person name="Machida M."/>
            <person name="Asai K."/>
            <person name="Sano M."/>
            <person name="Tanaka T."/>
            <person name="Kumagai T."/>
            <person name="Terai G."/>
            <person name="Kusumoto K."/>
            <person name="Arima T."/>
            <person name="Akita O."/>
            <person name="Kashiwagi Y."/>
            <person name="Abe K."/>
            <person name="Gomi K."/>
            <person name="Horiuchi H."/>
            <person name="Kitamoto K."/>
            <person name="Kobayashi T."/>
            <person name="Takeuchi M."/>
            <person name="Denning D.W."/>
            <person name="Galagan J.E."/>
            <person name="Nierman W.C."/>
            <person name="Yu J."/>
            <person name="Archer D.B."/>
            <person name="Bennett J.W."/>
            <person name="Bhatnagar D."/>
            <person name="Cleveland T.E."/>
            <person name="Fedorova N.D."/>
            <person name="Gotoh O."/>
            <person name="Horikawa H."/>
            <person name="Hosoyama A."/>
            <person name="Ichinomiya M."/>
            <person name="Igarashi R."/>
            <person name="Iwashita K."/>
            <person name="Juvvadi P.R."/>
            <person name="Kato M."/>
            <person name="Kato Y."/>
            <person name="Kin T."/>
            <person name="Kokubun A."/>
            <person name="Maeda H."/>
            <person name="Maeyama N."/>
            <person name="Maruyama J."/>
            <person name="Nagasaki H."/>
            <person name="Nakajima T."/>
            <person name="Oda K."/>
            <person name="Okada K."/>
            <person name="Paulsen I."/>
            <person name="Sakamoto K."/>
            <person name="Sawano T."/>
            <person name="Takahashi M."/>
            <person name="Takase K."/>
            <person name="Terabayashi Y."/>
            <person name="Wortman J.R."/>
            <person name="Yamada O."/>
            <person name="Yamagata Y."/>
            <person name="Anazawa H."/>
            <person name="Hata Y."/>
            <person name="Koide Y."/>
            <person name="Komori T."/>
            <person name="Koyama Y."/>
            <person name="Minetoki T."/>
            <person name="Suharnan S."/>
            <person name="Tanaka A."/>
            <person name="Isono K."/>
            <person name="Kuhara S."/>
            <person name="Ogasawara N."/>
            <person name="Kikuchi H."/>
        </authorList>
    </citation>
    <scope>NUCLEOTIDE SEQUENCE [LARGE SCALE GENOMIC DNA]</scope>
    <source>
        <strain>ATCC 42149 / RIB 40</strain>
    </source>
</reference>
<name>TRMB_ASPOR</name>